<keyword id="KW-0030">Aminoacyl-tRNA synthetase</keyword>
<keyword id="KW-0067">ATP-binding</keyword>
<keyword id="KW-0963">Cytoplasm</keyword>
<keyword id="KW-0436">Ligase</keyword>
<keyword id="KW-0547">Nucleotide-binding</keyword>
<keyword id="KW-0648">Protein biosynthesis</keyword>
<gene>
    <name evidence="1" type="primary">glyS</name>
    <name type="ordered locus">PLES_00071</name>
</gene>
<feature type="chain" id="PRO_1000197211" description="Glycine--tRNA ligase beta subunit">
    <location>
        <begin position="1"/>
        <end position="684"/>
    </location>
</feature>
<evidence type="ECO:0000255" key="1">
    <source>
        <dbReference type="HAMAP-Rule" id="MF_00255"/>
    </source>
</evidence>
<sequence length="684" mass="73947">MSAKDFLVELGTEELPPKALNSLGEAFLSGIEKGLKAAGLSYAAARFYAAPRRLAVLVEQLAVQQPDRTVNLDGPPLQAAFDASGNPTQAALGFAKKCGVDLQQIDKSGPKLRFSQTIAGQPAAGLLPGIVEASLNELPIPKRMRWAARREEFVRPTQWLVMLFGDDVVECEILAQKAGRESRGHRFHNPDNVRISSPAAYLEDLRGAHVLADFAERRELIAKRVAELAAEQQGSAIVPPSLLDEVTALVEWPVPLVCSFEERFLEVPQEALITTMQDNQKYFCLLDANGKLLPRFITVANVESKAPENIVSGNEKVVRPRLTDAEFFFKQDKKQPLESFNERLRNVVFQAQLGTVFEKAQRVSGLAAYIAERIGGNAQNASRAGILSKCDLATEMVGEFPEMQGIAGYYYATHGGEAEDVALALNEQYMPRGAGAELPSTLTGAAVAVADKLDTLVGIFGIGMLPTGSKDPYALRRAALGVLRILIEKQLDLDLVAAVNAAVEQYGDKVKAAGLAEQVLDFVFDRLRARYEDEGVDVAVYQSVRALKPSSPLDFDQRVQAVQAFRQLPEAEALAAANKRVSNILAKSEDEVPPNVDASLLVEAAEKALGSAVANAESEVAPLAAARDYRAALARLAALREPVDTFFADVMVNVDDAAVRANRYALLAKLRGSFLGVADISLLG</sequence>
<accession>B7V0P3</accession>
<proteinExistence type="inferred from homology"/>
<dbReference type="EC" id="6.1.1.14" evidence="1"/>
<dbReference type="EMBL" id="FM209186">
    <property type="protein sequence ID" value="CAW24735.1"/>
    <property type="molecule type" value="Genomic_DNA"/>
</dbReference>
<dbReference type="RefSeq" id="WP_003120686.1">
    <property type="nucleotide sequence ID" value="NC_011770.1"/>
</dbReference>
<dbReference type="SMR" id="B7V0P3"/>
<dbReference type="KEGG" id="pag:PLES_00071"/>
<dbReference type="HOGENOM" id="CLU_007220_2_2_6"/>
<dbReference type="GO" id="GO:0005829">
    <property type="term" value="C:cytosol"/>
    <property type="evidence" value="ECO:0007669"/>
    <property type="project" value="TreeGrafter"/>
</dbReference>
<dbReference type="GO" id="GO:0004814">
    <property type="term" value="F:arginine-tRNA ligase activity"/>
    <property type="evidence" value="ECO:0007669"/>
    <property type="project" value="InterPro"/>
</dbReference>
<dbReference type="GO" id="GO:0005524">
    <property type="term" value="F:ATP binding"/>
    <property type="evidence" value="ECO:0007669"/>
    <property type="project" value="UniProtKB-UniRule"/>
</dbReference>
<dbReference type="GO" id="GO:0004820">
    <property type="term" value="F:glycine-tRNA ligase activity"/>
    <property type="evidence" value="ECO:0007669"/>
    <property type="project" value="UniProtKB-UniRule"/>
</dbReference>
<dbReference type="GO" id="GO:0006420">
    <property type="term" value="P:arginyl-tRNA aminoacylation"/>
    <property type="evidence" value="ECO:0007669"/>
    <property type="project" value="InterPro"/>
</dbReference>
<dbReference type="GO" id="GO:0006426">
    <property type="term" value="P:glycyl-tRNA aminoacylation"/>
    <property type="evidence" value="ECO:0007669"/>
    <property type="project" value="UniProtKB-UniRule"/>
</dbReference>
<dbReference type="HAMAP" id="MF_00255">
    <property type="entry name" value="Gly_tRNA_synth_beta"/>
    <property type="match status" value="1"/>
</dbReference>
<dbReference type="InterPro" id="IPR008909">
    <property type="entry name" value="DALR_anticod-bd"/>
</dbReference>
<dbReference type="InterPro" id="IPR015944">
    <property type="entry name" value="Gly-tRNA-synth_bsu"/>
</dbReference>
<dbReference type="InterPro" id="IPR006194">
    <property type="entry name" value="Gly-tRNA-synth_heterodimer"/>
</dbReference>
<dbReference type="NCBIfam" id="TIGR00211">
    <property type="entry name" value="glyS"/>
    <property type="match status" value="1"/>
</dbReference>
<dbReference type="PANTHER" id="PTHR30075:SF2">
    <property type="entry name" value="GLYCINE--TRNA LIGASE, CHLOROPLASTIC_MITOCHONDRIAL 2"/>
    <property type="match status" value="1"/>
</dbReference>
<dbReference type="PANTHER" id="PTHR30075">
    <property type="entry name" value="GLYCYL-TRNA SYNTHETASE"/>
    <property type="match status" value="1"/>
</dbReference>
<dbReference type="Pfam" id="PF05746">
    <property type="entry name" value="DALR_1"/>
    <property type="match status" value="1"/>
</dbReference>
<dbReference type="Pfam" id="PF02092">
    <property type="entry name" value="tRNA_synt_2f"/>
    <property type="match status" value="1"/>
</dbReference>
<dbReference type="PRINTS" id="PR01045">
    <property type="entry name" value="TRNASYNTHGB"/>
</dbReference>
<dbReference type="SMART" id="SM00836">
    <property type="entry name" value="DALR_1"/>
    <property type="match status" value="1"/>
</dbReference>
<dbReference type="SUPFAM" id="SSF109604">
    <property type="entry name" value="HD-domain/PDEase-like"/>
    <property type="match status" value="1"/>
</dbReference>
<dbReference type="PROSITE" id="PS50861">
    <property type="entry name" value="AA_TRNA_LIGASE_II_GLYAB"/>
    <property type="match status" value="1"/>
</dbReference>
<reference key="1">
    <citation type="journal article" date="2009" name="Genome Res.">
        <title>Newly introduced genomic prophage islands are critical determinants of in vivo competitiveness in the Liverpool epidemic strain of Pseudomonas aeruginosa.</title>
        <authorList>
            <person name="Winstanley C."/>
            <person name="Langille M.G.I."/>
            <person name="Fothergill J.L."/>
            <person name="Kukavica-Ibrulj I."/>
            <person name="Paradis-Bleau C."/>
            <person name="Sanschagrin F."/>
            <person name="Thomson N.R."/>
            <person name="Winsor G.L."/>
            <person name="Quail M.A."/>
            <person name="Lennard N."/>
            <person name="Bignell A."/>
            <person name="Clarke L."/>
            <person name="Seeger K."/>
            <person name="Saunders D."/>
            <person name="Harris D."/>
            <person name="Parkhill J."/>
            <person name="Hancock R.E.W."/>
            <person name="Brinkman F.S.L."/>
            <person name="Levesque R.C."/>
        </authorList>
    </citation>
    <scope>NUCLEOTIDE SEQUENCE [LARGE SCALE GENOMIC DNA]</scope>
    <source>
        <strain>LESB58</strain>
    </source>
</reference>
<organism>
    <name type="scientific">Pseudomonas aeruginosa (strain LESB58)</name>
    <dbReference type="NCBI Taxonomy" id="557722"/>
    <lineage>
        <taxon>Bacteria</taxon>
        <taxon>Pseudomonadati</taxon>
        <taxon>Pseudomonadota</taxon>
        <taxon>Gammaproteobacteria</taxon>
        <taxon>Pseudomonadales</taxon>
        <taxon>Pseudomonadaceae</taxon>
        <taxon>Pseudomonas</taxon>
    </lineage>
</organism>
<protein>
    <recommendedName>
        <fullName evidence="1">Glycine--tRNA ligase beta subunit</fullName>
        <ecNumber evidence="1">6.1.1.14</ecNumber>
    </recommendedName>
    <alternativeName>
        <fullName evidence="1">Glycyl-tRNA synthetase beta subunit</fullName>
        <shortName evidence="1">GlyRS</shortName>
    </alternativeName>
</protein>
<comment type="catalytic activity">
    <reaction evidence="1">
        <text>tRNA(Gly) + glycine + ATP = glycyl-tRNA(Gly) + AMP + diphosphate</text>
        <dbReference type="Rhea" id="RHEA:16013"/>
        <dbReference type="Rhea" id="RHEA-COMP:9664"/>
        <dbReference type="Rhea" id="RHEA-COMP:9683"/>
        <dbReference type="ChEBI" id="CHEBI:30616"/>
        <dbReference type="ChEBI" id="CHEBI:33019"/>
        <dbReference type="ChEBI" id="CHEBI:57305"/>
        <dbReference type="ChEBI" id="CHEBI:78442"/>
        <dbReference type="ChEBI" id="CHEBI:78522"/>
        <dbReference type="ChEBI" id="CHEBI:456215"/>
        <dbReference type="EC" id="6.1.1.14"/>
    </reaction>
</comment>
<comment type="subunit">
    <text evidence="1">Tetramer of two alpha and two beta subunits.</text>
</comment>
<comment type="subcellular location">
    <subcellularLocation>
        <location evidence="1">Cytoplasm</location>
    </subcellularLocation>
</comment>
<comment type="similarity">
    <text evidence="1">Belongs to the class-II aminoacyl-tRNA synthetase family.</text>
</comment>
<name>SYGB_PSEA8</name>